<name>Y3861_BRUME</name>
<reference key="1">
    <citation type="journal article" date="2002" name="Proc. Natl. Acad. Sci. U.S.A.">
        <title>The genome sequence of the facultative intracellular pathogen Brucella melitensis.</title>
        <authorList>
            <person name="DelVecchio V.G."/>
            <person name="Kapatral V."/>
            <person name="Redkar R.J."/>
            <person name="Patra G."/>
            <person name="Mujer C."/>
            <person name="Los T."/>
            <person name="Ivanova N."/>
            <person name="Anderson I."/>
            <person name="Bhattacharyya A."/>
            <person name="Lykidis A."/>
            <person name="Reznik G."/>
            <person name="Jablonski L."/>
            <person name="Larsen N."/>
            <person name="D'Souza M."/>
            <person name="Bernal A."/>
            <person name="Mazur M."/>
            <person name="Goltsman E."/>
            <person name="Selkov E."/>
            <person name="Elzer P.H."/>
            <person name="Hagius S."/>
            <person name="O'Callaghan D."/>
            <person name="Letesson J.-J."/>
            <person name="Haselkorn R."/>
            <person name="Kyrpides N.C."/>
            <person name="Overbeek R."/>
        </authorList>
    </citation>
    <scope>NUCLEOTIDE SEQUENCE [LARGE SCALE GENOMIC DNA]</scope>
    <source>
        <strain>ATCC 23456 / CCUG 17765 / NCTC 10094 / 16M</strain>
    </source>
</reference>
<organism>
    <name type="scientific">Brucella melitensis biotype 1 (strain ATCC 23456 / CCUG 17765 / NCTC 10094 / 16M)</name>
    <dbReference type="NCBI Taxonomy" id="224914"/>
    <lineage>
        <taxon>Bacteria</taxon>
        <taxon>Pseudomonadati</taxon>
        <taxon>Pseudomonadota</taxon>
        <taxon>Alphaproteobacteria</taxon>
        <taxon>Hyphomicrobiales</taxon>
        <taxon>Brucellaceae</taxon>
        <taxon>Brucella/Ochrobactrum group</taxon>
        <taxon>Brucella</taxon>
    </lineage>
</organism>
<proteinExistence type="inferred from homology"/>
<accession>Q8YBN8</accession>
<comment type="function">
    <text evidence="1">Probably part of an ABC transporter complex that could be involved in peptide import. Probably responsible for the translocation of the substrate across the membrane (By similarity).</text>
</comment>
<comment type="subunit">
    <text evidence="4">The complex is composed of two ATP-binding proteins (BMEII0863 and BMEII0864), two transmembrane proteins (BMEII0860 and BMEII0861) and a solute-binding protein (BMEII0859).</text>
</comment>
<comment type="subcellular location">
    <subcellularLocation>
        <location evidence="4">Cell inner membrane</location>
        <topology evidence="2">Multi-pass membrane protein</topology>
    </subcellularLocation>
</comment>
<comment type="similarity">
    <text evidence="4">Belongs to the binding-protein-dependent transport system permease family.</text>
</comment>
<protein>
    <recommendedName>
        <fullName>Putative peptide permease protein BMEII0861</fullName>
    </recommendedName>
</protein>
<feature type="chain" id="PRO_0000328711" description="Putative peptide permease protein BMEII0861">
    <location>
        <begin position="1"/>
        <end position="302"/>
    </location>
</feature>
<feature type="transmembrane region" description="Helical" evidence="2">
    <location>
        <begin position="38"/>
        <end position="58"/>
    </location>
</feature>
<feature type="transmembrane region" description="Helical" evidence="2">
    <location>
        <begin position="101"/>
        <end position="121"/>
    </location>
</feature>
<feature type="transmembrane region" description="Helical" evidence="2">
    <location>
        <begin position="147"/>
        <end position="167"/>
    </location>
</feature>
<feature type="transmembrane region" description="Helical" evidence="2">
    <location>
        <begin position="230"/>
        <end position="250"/>
    </location>
</feature>
<feature type="transmembrane region" description="Helical" evidence="2">
    <location>
        <begin position="268"/>
        <end position="288"/>
    </location>
</feature>
<feature type="domain" description="ABC transmembrane type-1" evidence="2">
    <location>
        <begin position="97"/>
        <end position="288"/>
    </location>
</feature>
<feature type="region of interest" description="Disordered" evidence="3">
    <location>
        <begin position="1"/>
        <end position="22"/>
    </location>
</feature>
<dbReference type="EMBL" id="AE008918">
    <property type="protein sequence ID" value="AAL54103.1"/>
    <property type="molecule type" value="Genomic_DNA"/>
</dbReference>
<dbReference type="PIR" id="AD3617">
    <property type="entry name" value="AD3617"/>
</dbReference>
<dbReference type="SMR" id="Q8YBN8"/>
<dbReference type="KEGG" id="bme:BMEII0861"/>
<dbReference type="eggNOG" id="COG1173">
    <property type="taxonomic scope" value="Bacteria"/>
</dbReference>
<dbReference type="Proteomes" id="UP000000419">
    <property type="component" value="Chromosome II"/>
</dbReference>
<dbReference type="GO" id="GO:0005886">
    <property type="term" value="C:plasma membrane"/>
    <property type="evidence" value="ECO:0007669"/>
    <property type="project" value="UniProtKB-SubCell"/>
</dbReference>
<dbReference type="GO" id="GO:0015833">
    <property type="term" value="P:peptide transport"/>
    <property type="evidence" value="ECO:0007669"/>
    <property type="project" value="UniProtKB-KW"/>
</dbReference>
<dbReference type="GO" id="GO:0015031">
    <property type="term" value="P:protein transport"/>
    <property type="evidence" value="ECO:0007669"/>
    <property type="project" value="UniProtKB-KW"/>
</dbReference>
<dbReference type="GO" id="GO:0055085">
    <property type="term" value="P:transmembrane transport"/>
    <property type="evidence" value="ECO:0007669"/>
    <property type="project" value="InterPro"/>
</dbReference>
<dbReference type="CDD" id="cd06261">
    <property type="entry name" value="TM_PBP2"/>
    <property type="match status" value="1"/>
</dbReference>
<dbReference type="Gene3D" id="1.10.3720.10">
    <property type="entry name" value="MetI-like"/>
    <property type="match status" value="1"/>
</dbReference>
<dbReference type="InterPro" id="IPR050366">
    <property type="entry name" value="BP-dependent_transpt_permease"/>
</dbReference>
<dbReference type="InterPro" id="IPR000515">
    <property type="entry name" value="MetI-like"/>
</dbReference>
<dbReference type="InterPro" id="IPR035906">
    <property type="entry name" value="MetI-like_sf"/>
</dbReference>
<dbReference type="InterPro" id="IPR025966">
    <property type="entry name" value="OppC_N"/>
</dbReference>
<dbReference type="PANTHER" id="PTHR43386:SF1">
    <property type="entry name" value="D,D-DIPEPTIDE TRANSPORT SYSTEM PERMEASE PROTEIN DDPC-RELATED"/>
    <property type="match status" value="1"/>
</dbReference>
<dbReference type="PANTHER" id="PTHR43386">
    <property type="entry name" value="OLIGOPEPTIDE TRANSPORT SYSTEM PERMEASE PROTEIN APPC"/>
    <property type="match status" value="1"/>
</dbReference>
<dbReference type="Pfam" id="PF00528">
    <property type="entry name" value="BPD_transp_1"/>
    <property type="match status" value="1"/>
</dbReference>
<dbReference type="Pfam" id="PF12911">
    <property type="entry name" value="OppC_N"/>
    <property type="match status" value="1"/>
</dbReference>
<dbReference type="SUPFAM" id="SSF161098">
    <property type="entry name" value="MetI-like"/>
    <property type="match status" value="1"/>
</dbReference>
<dbReference type="PROSITE" id="PS50928">
    <property type="entry name" value="ABC_TM1"/>
    <property type="match status" value="1"/>
</dbReference>
<gene>
    <name type="ordered locus">BMEII0861</name>
</gene>
<sequence>MRSSIHASRLRKMGQSIPASTGPMARSANRFLQNRAAIFGLVLLTPLLFAVLTYPLWLPYKPNDIDLMAMNSAPSWKHWFGTDGVGRDVFARTMEGGRISLLVAVSSVVLSTAIGFLIGAISALGGRWADAIAMRSVDLAMTLPPVIFLLVLASIIGSGIWSTVVVIALLSWPVLSRMIRARLLELREREFVMASRGMGAGLGHLLFRHGLPNSIDILVVYATLQVANAILLEAGLSFLGLGVPPPAASWSNMLNAARSTAVLEQFPWQWLFPGGALVLAVLAINFIGDGLRDAFDPRAELN</sequence>
<keyword id="KW-0997">Cell inner membrane</keyword>
<keyword id="KW-1003">Cell membrane</keyword>
<keyword id="KW-0472">Membrane</keyword>
<keyword id="KW-0571">Peptide transport</keyword>
<keyword id="KW-0653">Protein transport</keyword>
<keyword id="KW-0812">Transmembrane</keyword>
<keyword id="KW-1133">Transmembrane helix</keyword>
<keyword id="KW-0813">Transport</keyword>
<evidence type="ECO:0000250" key="1"/>
<evidence type="ECO:0000255" key="2">
    <source>
        <dbReference type="PROSITE-ProRule" id="PRU00441"/>
    </source>
</evidence>
<evidence type="ECO:0000256" key="3">
    <source>
        <dbReference type="SAM" id="MobiDB-lite"/>
    </source>
</evidence>
<evidence type="ECO:0000305" key="4"/>